<name>PLD5_HUMAN</name>
<gene>
    <name type="primary">PLD5</name>
</gene>
<evidence type="ECO:0000255" key="1"/>
<evidence type="ECO:0000303" key="2">
    <source>
    </source>
</evidence>
<evidence type="ECO:0000303" key="3">
    <source ref="1"/>
</evidence>
<evidence type="ECO:0000305" key="4"/>
<accession>Q8N7P1</accession>
<accession>A1KXV0</accession>
<accession>B7Z324</accession>
<accession>Q494U9</accession>
<accession>Q8NB22</accession>
<proteinExistence type="evidence at protein level"/>
<protein>
    <recommendedName>
        <fullName>Inactive phospholipase D5</fullName>
        <shortName>Inactive PLD 5</shortName>
    </recommendedName>
    <alternativeName>
        <fullName>Inactive choline phosphatase 5</fullName>
    </alternativeName>
    <alternativeName>
        <fullName>Inactive phosphatidylcholine-hydrolyzing phospholipase D5</fullName>
    </alternativeName>
    <alternativeName>
        <fullName>PLDc</fullName>
    </alternativeName>
</protein>
<sequence>MEIRQHEWLSASPHEGFEQMRLKSRPKEPSPSLTRVGANFYSSVKQQDYSASVWLRRKDKLEHSQQKCIVIFALVCCFAILVALIFSAVDIMGEDEDGLSEKNCQNKCRIALVENIPEGLNYSENAPFHLSLFQGWMNLLNMAKKSVDIVSSHWDLNHTHPSACQGQRLFEKLLQLTSQNIEIKLVSDVTADSKVLEALKLKGAEVTYMNMTAYNKGRLQSSFWIVDKQHVYIGSAGLDWQSLGQMKELGVIFYNCSCLVLDLQRIFALYSSLKFKSRVPQTWSKRLYGVYDNEKKLQLQLNETKSQAFVSNSPKLFCPKNRSFDIDAIYSVIDDAKQYVYIAVMDYLPISSTSTKRTYWPDLDAKIREALVLRSVRVRLLLSFWKETDPLTFNFISSLKAICTEIANCSLKVKFFDLERENACATKEQKNHTFPRLNRNKYMVTDGAAYIGNFDWVGNDFTQNAGTGLVINQADVRNNRSIIKQLKDVFERDWYSPYAKTLQPTKQPNCSSLFKLKPLSNKTATDDTGGKDPRNV</sequence>
<feature type="chain" id="PRO_0000288606" description="Inactive phospholipase D5">
    <location>
        <begin position="1"/>
        <end position="536"/>
    </location>
</feature>
<feature type="transmembrane region" description="Helical" evidence="1">
    <location>
        <begin position="69"/>
        <end position="89"/>
    </location>
</feature>
<feature type="domain" description="PLD phosphodiesterase 1">
    <location>
        <begin position="215"/>
        <end position="242"/>
    </location>
</feature>
<feature type="domain" description="PLD phosphodiesterase 2">
    <location>
        <begin position="434"/>
        <end position="460"/>
    </location>
</feature>
<feature type="glycosylation site" description="N-linked (GlcNAc...) asparagine" evidence="1">
    <location>
        <position position="121"/>
    </location>
</feature>
<feature type="glycosylation site" description="N-linked (GlcNAc...) asparagine" evidence="1">
    <location>
        <position position="302"/>
    </location>
</feature>
<feature type="splice variant" id="VSP_025724" description="In isoform 3." evidence="2">
    <location>
        <begin position="1"/>
        <end position="208"/>
    </location>
</feature>
<feature type="splice variant" id="VSP_025725" description="In isoform 2." evidence="2">
    <original>MEIRQHEWLSASPHEGFEQMRLKSRPKEPSPSLTRVGANFYSSVKQQDYSASVWLRRKDKLEHSQQKCIVIFALVCCFAILVALIFSAVDIMGEDEDGLSEKNCQNKC</original>
    <variation>MRMDSQKKIAKINVGK</variation>
    <location>
        <begin position="1"/>
        <end position="108"/>
    </location>
</feature>
<feature type="splice variant" id="VSP_025726" description="In isoform 4." evidence="2 3">
    <location>
        <begin position="1"/>
        <end position="62"/>
    </location>
</feature>
<feature type="splice variant" id="VSP_025727" description="In isoform 4." evidence="2 3">
    <original>H</original>
    <variation>M</variation>
    <location>
        <position position="63"/>
    </location>
</feature>
<reference key="1">
    <citation type="submission" date="2003-10" db="EMBL/GenBank/DDBJ databases">
        <authorList>
            <person name="Li X."/>
            <person name="Xie Y."/>
            <person name="Mao Y."/>
        </authorList>
    </citation>
    <scope>NUCLEOTIDE SEQUENCE [MRNA] (ISOFORM 4)</scope>
</reference>
<reference key="2">
    <citation type="journal article" date="2004" name="Nat. Genet.">
        <title>Complete sequencing and characterization of 21,243 full-length human cDNAs.</title>
        <authorList>
            <person name="Ota T."/>
            <person name="Suzuki Y."/>
            <person name="Nishikawa T."/>
            <person name="Otsuki T."/>
            <person name="Sugiyama T."/>
            <person name="Irie R."/>
            <person name="Wakamatsu A."/>
            <person name="Hayashi K."/>
            <person name="Sato H."/>
            <person name="Nagai K."/>
            <person name="Kimura K."/>
            <person name="Makita H."/>
            <person name="Sekine M."/>
            <person name="Obayashi M."/>
            <person name="Nishi T."/>
            <person name="Shibahara T."/>
            <person name="Tanaka T."/>
            <person name="Ishii S."/>
            <person name="Yamamoto J."/>
            <person name="Saito K."/>
            <person name="Kawai Y."/>
            <person name="Isono Y."/>
            <person name="Nakamura Y."/>
            <person name="Nagahari K."/>
            <person name="Murakami K."/>
            <person name="Yasuda T."/>
            <person name="Iwayanagi T."/>
            <person name="Wagatsuma M."/>
            <person name="Shiratori A."/>
            <person name="Sudo H."/>
            <person name="Hosoiri T."/>
            <person name="Kaku Y."/>
            <person name="Kodaira H."/>
            <person name="Kondo H."/>
            <person name="Sugawara M."/>
            <person name="Takahashi M."/>
            <person name="Kanda K."/>
            <person name="Yokoi T."/>
            <person name="Furuya T."/>
            <person name="Kikkawa E."/>
            <person name="Omura Y."/>
            <person name="Abe K."/>
            <person name="Kamihara K."/>
            <person name="Katsuta N."/>
            <person name="Sato K."/>
            <person name="Tanikawa M."/>
            <person name="Yamazaki M."/>
            <person name="Ninomiya K."/>
            <person name="Ishibashi T."/>
            <person name="Yamashita H."/>
            <person name="Murakawa K."/>
            <person name="Fujimori K."/>
            <person name="Tanai H."/>
            <person name="Kimata M."/>
            <person name="Watanabe M."/>
            <person name="Hiraoka S."/>
            <person name="Chiba Y."/>
            <person name="Ishida S."/>
            <person name="Ono Y."/>
            <person name="Takiguchi S."/>
            <person name="Watanabe S."/>
            <person name="Yosida M."/>
            <person name="Hotuta T."/>
            <person name="Kusano J."/>
            <person name="Kanehori K."/>
            <person name="Takahashi-Fujii A."/>
            <person name="Hara H."/>
            <person name="Tanase T.-O."/>
            <person name="Nomura Y."/>
            <person name="Togiya S."/>
            <person name="Komai F."/>
            <person name="Hara R."/>
            <person name="Takeuchi K."/>
            <person name="Arita M."/>
            <person name="Imose N."/>
            <person name="Musashino K."/>
            <person name="Yuuki H."/>
            <person name="Oshima A."/>
            <person name="Sasaki N."/>
            <person name="Aotsuka S."/>
            <person name="Yoshikawa Y."/>
            <person name="Matsunawa H."/>
            <person name="Ichihara T."/>
            <person name="Shiohata N."/>
            <person name="Sano S."/>
            <person name="Moriya S."/>
            <person name="Momiyama H."/>
            <person name="Satoh N."/>
            <person name="Takami S."/>
            <person name="Terashima Y."/>
            <person name="Suzuki O."/>
            <person name="Nakagawa S."/>
            <person name="Senoh A."/>
            <person name="Mizoguchi H."/>
            <person name="Goto Y."/>
            <person name="Shimizu F."/>
            <person name="Wakebe H."/>
            <person name="Hishigaki H."/>
            <person name="Watanabe T."/>
            <person name="Sugiyama A."/>
            <person name="Takemoto M."/>
            <person name="Kawakami B."/>
            <person name="Yamazaki M."/>
            <person name="Watanabe K."/>
            <person name="Kumagai A."/>
            <person name="Itakura S."/>
            <person name="Fukuzumi Y."/>
            <person name="Fujimori Y."/>
            <person name="Komiyama M."/>
            <person name="Tashiro H."/>
            <person name="Tanigami A."/>
            <person name="Fujiwara T."/>
            <person name="Ono T."/>
            <person name="Yamada K."/>
            <person name="Fujii Y."/>
            <person name="Ozaki K."/>
            <person name="Hirao M."/>
            <person name="Ohmori Y."/>
            <person name="Kawabata A."/>
            <person name="Hikiji T."/>
            <person name="Kobatake N."/>
            <person name="Inagaki H."/>
            <person name="Ikema Y."/>
            <person name="Okamoto S."/>
            <person name="Okitani R."/>
            <person name="Kawakami T."/>
            <person name="Noguchi S."/>
            <person name="Itoh T."/>
            <person name="Shigeta K."/>
            <person name="Senba T."/>
            <person name="Matsumura K."/>
            <person name="Nakajima Y."/>
            <person name="Mizuno T."/>
            <person name="Morinaga M."/>
            <person name="Sasaki M."/>
            <person name="Togashi T."/>
            <person name="Oyama M."/>
            <person name="Hata H."/>
            <person name="Watanabe M."/>
            <person name="Komatsu T."/>
            <person name="Mizushima-Sugano J."/>
            <person name="Satoh T."/>
            <person name="Shirai Y."/>
            <person name="Takahashi Y."/>
            <person name="Nakagawa K."/>
            <person name="Okumura K."/>
            <person name="Nagase T."/>
            <person name="Nomura N."/>
            <person name="Kikuchi H."/>
            <person name="Masuho Y."/>
            <person name="Yamashita R."/>
            <person name="Nakai K."/>
            <person name="Yada T."/>
            <person name="Nakamura Y."/>
            <person name="Ohara O."/>
            <person name="Isogai T."/>
            <person name="Sugano S."/>
        </authorList>
    </citation>
    <scope>NUCLEOTIDE SEQUENCE [LARGE SCALE MRNA] (ISOFORMS 2; 3 AND 4)</scope>
    <source>
        <tissue>Brain</tissue>
        <tissue>Corpus callosum</tissue>
        <tissue>Trachea</tissue>
    </source>
</reference>
<reference key="3">
    <citation type="journal article" date="2006" name="Nature">
        <title>The DNA sequence and biological annotation of human chromosome 1.</title>
        <authorList>
            <person name="Gregory S.G."/>
            <person name="Barlow K.F."/>
            <person name="McLay K.E."/>
            <person name="Kaul R."/>
            <person name="Swarbreck D."/>
            <person name="Dunham A."/>
            <person name="Scott C.E."/>
            <person name="Howe K.L."/>
            <person name="Woodfine K."/>
            <person name="Spencer C.C.A."/>
            <person name="Jones M.C."/>
            <person name="Gillson C."/>
            <person name="Searle S."/>
            <person name="Zhou Y."/>
            <person name="Kokocinski F."/>
            <person name="McDonald L."/>
            <person name="Evans R."/>
            <person name="Phillips K."/>
            <person name="Atkinson A."/>
            <person name="Cooper R."/>
            <person name="Jones C."/>
            <person name="Hall R.E."/>
            <person name="Andrews T.D."/>
            <person name="Lloyd C."/>
            <person name="Ainscough R."/>
            <person name="Almeida J.P."/>
            <person name="Ambrose K.D."/>
            <person name="Anderson F."/>
            <person name="Andrew R.W."/>
            <person name="Ashwell R.I.S."/>
            <person name="Aubin K."/>
            <person name="Babbage A.K."/>
            <person name="Bagguley C.L."/>
            <person name="Bailey J."/>
            <person name="Beasley H."/>
            <person name="Bethel G."/>
            <person name="Bird C.P."/>
            <person name="Bray-Allen S."/>
            <person name="Brown J.Y."/>
            <person name="Brown A.J."/>
            <person name="Buckley D."/>
            <person name="Burton J."/>
            <person name="Bye J."/>
            <person name="Carder C."/>
            <person name="Chapman J.C."/>
            <person name="Clark S.Y."/>
            <person name="Clarke G."/>
            <person name="Clee C."/>
            <person name="Cobley V."/>
            <person name="Collier R.E."/>
            <person name="Corby N."/>
            <person name="Coville G.J."/>
            <person name="Davies J."/>
            <person name="Deadman R."/>
            <person name="Dunn M."/>
            <person name="Earthrowl M."/>
            <person name="Ellington A.G."/>
            <person name="Errington H."/>
            <person name="Frankish A."/>
            <person name="Frankland J."/>
            <person name="French L."/>
            <person name="Garner P."/>
            <person name="Garnett J."/>
            <person name="Gay L."/>
            <person name="Ghori M.R.J."/>
            <person name="Gibson R."/>
            <person name="Gilby L.M."/>
            <person name="Gillett W."/>
            <person name="Glithero R.J."/>
            <person name="Grafham D.V."/>
            <person name="Griffiths C."/>
            <person name="Griffiths-Jones S."/>
            <person name="Grocock R."/>
            <person name="Hammond S."/>
            <person name="Harrison E.S.I."/>
            <person name="Hart E."/>
            <person name="Haugen E."/>
            <person name="Heath P.D."/>
            <person name="Holmes S."/>
            <person name="Holt K."/>
            <person name="Howden P.J."/>
            <person name="Hunt A.R."/>
            <person name="Hunt S.E."/>
            <person name="Hunter G."/>
            <person name="Isherwood J."/>
            <person name="James R."/>
            <person name="Johnson C."/>
            <person name="Johnson D."/>
            <person name="Joy A."/>
            <person name="Kay M."/>
            <person name="Kershaw J.K."/>
            <person name="Kibukawa M."/>
            <person name="Kimberley A.M."/>
            <person name="King A."/>
            <person name="Knights A.J."/>
            <person name="Lad H."/>
            <person name="Laird G."/>
            <person name="Lawlor S."/>
            <person name="Leongamornlert D.A."/>
            <person name="Lloyd D.M."/>
            <person name="Loveland J."/>
            <person name="Lovell J."/>
            <person name="Lush M.J."/>
            <person name="Lyne R."/>
            <person name="Martin S."/>
            <person name="Mashreghi-Mohammadi M."/>
            <person name="Matthews L."/>
            <person name="Matthews N.S.W."/>
            <person name="McLaren S."/>
            <person name="Milne S."/>
            <person name="Mistry S."/>
            <person name="Moore M.J.F."/>
            <person name="Nickerson T."/>
            <person name="O'Dell C.N."/>
            <person name="Oliver K."/>
            <person name="Palmeiri A."/>
            <person name="Palmer S.A."/>
            <person name="Parker A."/>
            <person name="Patel D."/>
            <person name="Pearce A.V."/>
            <person name="Peck A.I."/>
            <person name="Pelan S."/>
            <person name="Phelps K."/>
            <person name="Phillimore B.J."/>
            <person name="Plumb R."/>
            <person name="Rajan J."/>
            <person name="Raymond C."/>
            <person name="Rouse G."/>
            <person name="Saenphimmachak C."/>
            <person name="Sehra H.K."/>
            <person name="Sheridan E."/>
            <person name="Shownkeen R."/>
            <person name="Sims S."/>
            <person name="Skuce C.D."/>
            <person name="Smith M."/>
            <person name="Steward C."/>
            <person name="Subramanian S."/>
            <person name="Sycamore N."/>
            <person name="Tracey A."/>
            <person name="Tromans A."/>
            <person name="Van Helmond Z."/>
            <person name="Wall M."/>
            <person name="Wallis J.M."/>
            <person name="White S."/>
            <person name="Whitehead S.L."/>
            <person name="Wilkinson J.E."/>
            <person name="Willey D.L."/>
            <person name="Williams H."/>
            <person name="Wilming L."/>
            <person name="Wray P.W."/>
            <person name="Wu Z."/>
            <person name="Coulson A."/>
            <person name="Vaudin M."/>
            <person name="Sulston J.E."/>
            <person name="Durbin R.M."/>
            <person name="Hubbard T."/>
            <person name="Wooster R."/>
            <person name="Dunham I."/>
            <person name="Carter N.P."/>
            <person name="McVean G."/>
            <person name="Ross M.T."/>
            <person name="Harrow J."/>
            <person name="Olson M.V."/>
            <person name="Beck S."/>
            <person name="Rogers J."/>
            <person name="Bentley D.R."/>
        </authorList>
    </citation>
    <scope>NUCLEOTIDE SEQUENCE [LARGE SCALE GENOMIC DNA]</scope>
</reference>
<reference key="4">
    <citation type="journal article" date="2004" name="Genome Res.">
        <title>The status, quality, and expansion of the NIH full-length cDNA project: the Mammalian Gene Collection (MGC).</title>
        <authorList>
            <consortium name="The MGC Project Team"/>
        </authorList>
    </citation>
    <scope>NUCLEOTIDE SEQUENCE [LARGE SCALE MRNA] OF 46-536 (ISOFORM 1)</scope>
</reference>
<keyword id="KW-0025">Alternative splicing</keyword>
<keyword id="KW-0325">Glycoprotein</keyword>
<keyword id="KW-0472">Membrane</keyword>
<keyword id="KW-1267">Proteomics identification</keyword>
<keyword id="KW-1185">Reference proteome</keyword>
<keyword id="KW-0677">Repeat</keyword>
<keyword id="KW-0812">Transmembrane</keyword>
<keyword id="KW-1133">Transmembrane helix</keyword>
<organism>
    <name type="scientific">Homo sapiens</name>
    <name type="common">Human</name>
    <dbReference type="NCBI Taxonomy" id="9606"/>
    <lineage>
        <taxon>Eukaryota</taxon>
        <taxon>Metazoa</taxon>
        <taxon>Chordata</taxon>
        <taxon>Craniata</taxon>
        <taxon>Vertebrata</taxon>
        <taxon>Euteleostomi</taxon>
        <taxon>Mammalia</taxon>
        <taxon>Eutheria</taxon>
        <taxon>Euarchontoglires</taxon>
        <taxon>Primates</taxon>
        <taxon>Haplorrhini</taxon>
        <taxon>Catarrhini</taxon>
        <taxon>Hominidae</taxon>
        <taxon>Homo</taxon>
    </lineage>
</organism>
<comment type="subcellular location">
    <subcellularLocation>
        <location evidence="4">Membrane</location>
        <topology evidence="4">Single-pass membrane protein</topology>
    </subcellularLocation>
</comment>
<comment type="alternative products">
    <event type="alternative splicing"/>
    <isoform>
        <id>Q8N7P1-1</id>
        <name>1</name>
        <sequence type="displayed"/>
    </isoform>
    <isoform>
        <id>Q8N7P1-2</id>
        <name>2</name>
        <sequence type="described" ref="VSP_025725"/>
    </isoform>
    <isoform>
        <id>Q8N7P1-3</id>
        <name>3</name>
        <sequence type="described" ref="VSP_025724"/>
    </isoform>
    <isoform>
        <id>Q8N7P1-4</id>
        <name>4</name>
        <sequence type="described" ref="VSP_025726 VSP_025727"/>
    </isoform>
</comment>
<comment type="similarity">
    <text evidence="4">Belongs to the phospholipase D family.</text>
</comment>
<comment type="caution">
    <text evidence="4">In contrast to other members of the family, it lacks the conserved active sites, suggesting that it has no phospholipase activity.</text>
</comment>
<comment type="sequence caution" evidence="4">
    <conflict type="erroneous initiation">
        <sequence resource="EMBL-CDS" id="AAI01374"/>
    </conflict>
</comment>
<comment type="sequence caution" evidence="4">
    <conflict type="erroneous initiation">
        <sequence resource="EMBL-CDS" id="AAI01375"/>
    </conflict>
</comment>
<comment type="sequence caution" evidence="4">
    <conflict type="erroneous initiation">
        <sequence resource="EMBL-CDS" id="AAI01376"/>
    </conflict>
</comment>
<dbReference type="EMBL" id="AY461578">
    <property type="protein sequence ID" value="AAS91020.1"/>
    <property type="molecule type" value="mRNA"/>
</dbReference>
<dbReference type="EMBL" id="AK091691">
    <property type="protein sequence ID" value="BAC03722.1"/>
    <property type="molecule type" value="mRNA"/>
</dbReference>
<dbReference type="EMBL" id="AK098092">
    <property type="protein sequence ID" value="BAC05230.1"/>
    <property type="molecule type" value="mRNA"/>
</dbReference>
<dbReference type="EMBL" id="AK295421">
    <property type="protein sequence ID" value="BAH12060.1"/>
    <property type="molecule type" value="mRNA"/>
</dbReference>
<dbReference type="EMBL" id="AL360271">
    <property type="status" value="NOT_ANNOTATED_CDS"/>
    <property type="molecule type" value="Genomic_DNA"/>
</dbReference>
<dbReference type="EMBL" id="AL583845">
    <property type="status" value="NOT_ANNOTATED_CDS"/>
    <property type="molecule type" value="Genomic_DNA"/>
</dbReference>
<dbReference type="EMBL" id="AL591686">
    <property type="status" value="NOT_ANNOTATED_CDS"/>
    <property type="molecule type" value="Genomic_DNA"/>
</dbReference>
<dbReference type="EMBL" id="AL445704">
    <property type="status" value="NOT_ANNOTATED_CDS"/>
    <property type="molecule type" value="Genomic_DNA"/>
</dbReference>
<dbReference type="EMBL" id="BC101373">
    <property type="protein sequence ID" value="AAI01374.1"/>
    <property type="status" value="ALT_INIT"/>
    <property type="molecule type" value="mRNA"/>
</dbReference>
<dbReference type="EMBL" id="BC101374">
    <property type="protein sequence ID" value="AAI01375.1"/>
    <property type="status" value="ALT_INIT"/>
    <property type="molecule type" value="mRNA"/>
</dbReference>
<dbReference type="EMBL" id="BC101375">
    <property type="protein sequence ID" value="AAI01376.1"/>
    <property type="status" value="ALT_INIT"/>
    <property type="molecule type" value="mRNA"/>
</dbReference>
<dbReference type="CCDS" id="CCDS1621.2">
    <molecule id="Q8N7P1-1"/>
</dbReference>
<dbReference type="CCDS" id="CCDS55692.1">
    <molecule id="Q8N7P1-4"/>
</dbReference>
<dbReference type="RefSeq" id="NP_001182740.1">
    <molecule id="Q8N7P1-4"/>
    <property type="nucleotide sequence ID" value="NM_001195811.2"/>
</dbReference>
<dbReference type="RefSeq" id="NP_001182741.1">
    <molecule id="Q8N7P1-3"/>
    <property type="nucleotide sequence ID" value="NM_001195812.2"/>
</dbReference>
<dbReference type="RefSeq" id="NP_001307201.1">
    <molecule id="Q8N7P1-2"/>
    <property type="nucleotide sequence ID" value="NM_001320272.2"/>
</dbReference>
<dbReference type="RefSeq" id="NP_001358991.1">
    <molecule id="Q8N7P1-1"/>
    <property type="nucleotide sequence ID" value="NM_001372062.1"/>
</dbReference>
<dbReference type="RefSeq" id="NP_689879.2">
    <property type="nucleotide sequence ID" value="NM_152666.2"/>
</dbReference>
<dbReference type="RefSeq" id="XP_006711815.1">
    <property type="nucleotide sequence ID" value="XM_006711752.2"/>
</dbReference>
<dbReference type="RefSeq" id="XP_011542417.1">
    <property type="nucleotide sequence ID" value="XM_011544115.2"/>
</dbReference>
<dbReference type="RefSeq" id="XP_011542418.1">
    <property type="nucleotide sequence ID" value="XM_011544116.2"/>
</dbReference>
<dbReference type="RefSeq" id="XP_011542422.1">
    <molecule id="Q8N7P1-3"/>
    <property type="nucleotide sequence ID" value="XM_011544120.3"/>
</dbReference>
<dbReference type="RefSeq" id="XP_011542423.1">
    <molecule id="Q8N7P1-3"/>
    <property type="nucleotide sequence ID" value="XM_011544121.3"/>
</dbReference>
<dbReference type="RefSeq" id="XP_011542424.1">
    <molecule id="Q8N7P1-3"/>
    <property type="nucleotide sequence ID" value="XM_011544122.4"/>
</dbReference>
<dbReference type="RefSeq" id="XP_016856056.1">
    <property type="nucleotide sequence ID" value="XM_017000567.1"/>
</dbReference>
<dbReference type="RefSeq" id="XP_016856057.1">
    <property type="nucleotide sequence ID" value="XM_017000568.1"/>
</dbReference>
<dbReference type="RefSeq" id="XP_016856058.1">
    <property type="nucleotide sequence ID" value="XM_017000569.1"/>
</dbReference>
<dbReference type="RefSeq" id="XP_016856059.1">
    <molecule id="Q8N7P1-3"/>
    <property type="nucleotide sequence ID" value="XM_017000570.3"/>
</dbReference>
<dbReference type="RefSeq" id="XP_054190920.1">
    <molecule id="Q8N7P1-3"/>
    <property type="nucleotide sequence ID" value="XM_054334945.1"/>
</dbReference>
<dbReference type="RefSeq" id="XP_054190921.1">
    <molecule id="Q8N7P1-3"/>
    <property type="nucleotide sequence ID" value="XM_054334946.1"/>
</dbReference>
<dbReference type="RefSeq" id="XP_054190922.1">
    <molecule id="Q8N7P1-3"/>
    <property type="nucleotide sequence ID" value="XM_054334947.1"/>
</dbReference>
<dbReference type="RefSeq" id="XP_054190923.1">
    <molecule id="Q8N7P1-3"/>
    <property type="nucleotide sequence ID" value="XM_054334948.1"/>
</dbReference>
<dbReference type="SMR" id="Q8N7P1"/>
<dbReference type="BioGRID" id="128302">
    <property type="interactions" value="58"/>
</dbReference>
<dbReference type="FunCoup" id="Q8N7P1">
    <property type="interactions" value="10"/>
</dbReference>
<dbReference type="IntAct" id="Q8N7P1">
    <property type="interactions" value="36"/>
</dbReference>
<dbReference type="STRING" id="9606.ENSP00000440896"/>
<dbReference type="GlyCosmos" id="Q8N7P1">
    <property type="glycosylation" value="2 sites, No reported glycans"/>
</dbReference>
<dbReference type="GlyGen" id="Q8N7P1">
    <property type="glycosylation" value="5 sites, 1 N-linked glycan (2 sites), 1 O-linked glycan (1 site)"/>
</dbReference>
<dbReference type="iPTMnet" id="Q8N7P1"/>
<dbReference type="PhosphoSitePlus" id="Q8N7P1"/>
<dbReference type="BioMuta" id="PLD5"/>
<dbReference type="DMDM" id="152112223"/>
<dbReference type="jPOST" id="Q8N7P1"/>
<dbReference type="MassIVE" id="Q8N7P1"/>
<dbReference type="PaxDb" id="9606-ENSP00000440896"/>
<dbReference type="PeptideAtlas" id="Q8N7P1"/>
<dbReference type="ProteomicsDB" id="72311">
    <molecule id="Q8N7P1-1"/>
</dbReference>
<dbReference type="ProteomicsDB" id="72312">
    <molecule id="Q8N7P1-2"/>
</dbReference>
<dbReference type="ProteomicsDB" id="72313">
    <molecule id="Q8N7P1-3"/>
</dbReference>
<dbReference type="ProteomicsDB" id="72314">
    <molecule id="Q8N7P1-4"/>
</dbReference>
<dbReference type="Antibodypedia" id="34707">
    <property type="antibodies" value="122 antibodies from 20 providers"/>
</dbReference>
<dbReference type="DNASU" id="200150"/>
<dbReference type="Ensembl" id="ENST00000427495.5">
    <molecule id="Q8N7P1-4"/>
    <property type="protein sequence ID" value="ENSP00000401285.1"/>
    <property type="gene ID" value="ENSG00000180287.17"/>
</dbReference>
<dbReference type="Ensembl" id="ENST00000442594.6">
    <molecule id="Q8N7P1-1"/>
    <property type="protein sequence ID" value="ENSP00000414188.3"/>
    <property type="gene ID" value="ENSG00000180287.17"/>
</dbReference>
<dbReference type="Ensembl" id="ENST00000536534.7">
    <molecule id="Q8N7P1-1"/>
    <property type="protein sequence ID" value="ENSP00000440896.1"/>
    <property type="gene ID" value="ENSG00000180287.17"/>
</dbReference>
<dbReference type="GeneID" id="200150"/>
<dbReference type="KEGG" id="hsa:200150"/>
<dbReference type="MANE-Select" id="ENST00000536534.7">
    <property type="protein sequence ID" value="ENSP00000440896.1"/>
    <property type="RefSeq nucleotide sequence ID" value="NM_001372062.1"/>
    <property type="RefSeq protein sequence ID" value="NP_001358991.1"/>
</dbReference>
<dbReference type="UCSC" id="uc001hzl.4">
    <molecule id="Q8N7P1-1"/>
    <property type="organism name" value="human"/>
</dbReference>
<dbReference type="AGR" id="HGNC:26879"/>
<dbReference type="CTD" id="200150"/>
<dbReference type="DisGeNET" id="200150"/>
<dbReference type="GeneCards" id="PLD5"/>
<dbReference type="HGNC" id="HGNC:26879">
    <property type="gene designation" value="PLD5"/>
</dbReference>
<dbReference type="HPA" id="ENSG00000180287">
    <property type="expression patterns" value="Group enriched (brain, choroid plexus)"/>
</dbReference>
<dbReference type="neXtProt" id="NX_Q8N7P1"/>
<dbReference type="OpenTargets" id="ENSG00000180287"/>
<dbReference type="PharmGKB" id="PA142671168"/>
<dbReference type="VEuPathDB" id="HostDB:ENSG00000180287"/>
<dbReference type="eggNOG" id="KOG3603">
    <property type="taxonomic scope" value="Eukaryota"/>
</dbReference>
<dbReference type="GeneTree" id="ENSGT00950000183059"/>
<dbReference type="HOGENOM" id="CLU_027021_0_0_1"/>
<dbReference type="InParanoid" id="Q8N7P1"/>
<dbReference type="OMA" id="ETRYWPY"/>
<dbReference type="OrthoDB" id="9511099at2759"/>
<dbReference type="PAN-GO" id="Q8N7P1">
    <property type="GO annotations" value="0 GO annotations based on evolutionary models"/>
</dbReference>
<dbReference type="PhylomeDB" id="Q8N7P1"/>
<dbReference type="TreeFam" id="TF313378"/>
<dbReference type="PathwayCommons" id="Q8N7P1"/>
<dbReference type="BioGRID-ORCS" id="200150">
    <property type="hits" value="10 hits in 1139 CRISPR screens"/>
</dbReference>
<dbReference type="ChiTaRS" id="PLD5">
    <property type="organism name" value="human"/>
</dbReference>
<dbReference type="GeneWiki" id="PLD5"/>
<dbReference type="GenomeRNAi" id="200150"/>
<dbReference type="Pharos" id="Q8N7P1">
    <property type="development level" value="Tbio"/>
</dbReference>
<dbReference type="PRO" id="PR:Q8N7P1"/>
<dbReference type="Proteomes" id="UP000005640">
    <property type="component" value="Chromosome 1"/>
</dbReference>
<dbReference type="RNAct" id="Q8N7P1">
    <property type="molecule type" value="protein"/>
</dbReference>
<dbReference type="Bgee" id="ENSG00000180287">
    <property type="expression patterns" value="Expressed in pigmented layer of retina and 112 other cell types or tissues"/>
</dbReference>
<dbReference type="ExpressionAtlas" id="Q8N7P1">
    <property type="expression patterns" value="baseline and differential"/>
</dbReference>
<dbReference type="GO" id="GO:0016020">
    <property type="term" value="C:membrane"/>
    <property type="evidence" value="ECO:0007669"/>
    <property type="project" value="UniProtKB-SubCell"/>
</dbReference>
<dbReference type="GO" id="GO:0003824">
    <property type="term" value="F:catalytic activity"/>
    <property type="evidence" value="ECO:0007669"/>
    <property type="project" value="InterPro"/>
</dbReference>
<dbReference type="CDD" id="cd09146">
    <property type="entry name" value="PLDc_vPLD5_1"/>
    <property type="match status" value="1"/>
</dbReference>
<dbReference type="CDD" id="cd09149">
    <property type="entry name" value="PLDc_vPLD5_2"/>
    <property type="match status" value="1"/>
</dbReference>
<dbReference type="Gene3D" id="3.30.870.10">
    <property type="entry name" value="Endonuclease Chain A"/>
    <property type="match status" value="2"/>
</dbReference>
<dbReference type="InterPro" id="IPR050874">
    <property type="entry name" value="Diverse_PLD-related"/>
</dbReference>
<dbReference type="InterPro" id="IPR032803">
    <property type="entry name" value="PLDc_3"/>
</dbReference>
<dbReference type="InterPro" id="IPR001736">
    <property type="entry name" value="PLipase_D/transphosphatidylase"/>
</dbReference>
<dbReference type="PANTHER" id="PTHR10185:SF9">
    <property type="entry name" value="INACTIVE PHOSPHOLIPASE D5"/>
    <property type="match status" value="1"/>
</dbReference>
<dbReference type="PANTHER" id="PTHR10185">
    <property type="entry name" value="PHOSPHOLIPASE D - RELATED"/>
    <property type="match status" value="1"/>
</dbReference>
<dbReference type="Pfam" id="PF13918">
    <property type="entry name" value="PLDc_3"/>
    <property type="match status" value="1"/>
</dbReference>
<dbReference type="SMART" id="SM00155">
    <property type="entry name" value="PLDc"/>
    <property type="match status" value="2"/>
</dbReference>
<dbReference type="SUPFAM" id="SSF56024">
    <property type="entry name" value="Phospholipase D/nuclease"/>
    <property type="match status" value="2"/>
</dbReference>